<evidence type="ECO:0000305" key="1"/>
<name>Y1480_MYCTU</name>
<comment type="similarity">
    <text evidence="1">To M.avium MAV169.</text>
</comment>
<dbReference type="EMBL" id="AL123456">
    <property type="protein sequence ID" value="CCP44240.1"/>
    <property type="molecule type" value="Genomic_DNA"/>
</dbReference>
<dbReference type="PIR" id="C70874">
    <property type="entry name" value="C70874"/>
</dbReference>
<dbReference type="RefSeq" id="NP_215996.1">
    <property type="nucleotide sequence ID" value="NC_000962.3"/>
</dbReference>
<dbReference type="RefSeq" id="WP_003407529.1">
    <property type="nucleotide sequence ID" value="NZ_NVQJ01000004.1"/>
</dbReference>
<dbReference type="SMR" id="P9WLX5"/>
<dbReference type="STRING" id="83332.Rv1480"/>
<dbReference type="PaxDb" id="83332-Rv1480"/>
<dbReference type="DNASU" id="886531"/>
<dbReference type="GeneID" id="886531"/>
<dbReference type="KEGG" id="mtu:Rv1480"/>
<dbReference type="KEGG" id="mtv:RVBD_1480"/>
<dbReference type="TubercuList" id="Rv1480"/>
<dbReference type="eggNOG" id="COG1721">
    <property type="taxonomic scope" value="Bacteria"/>
</dbReference>
<dbReference type="InParanoid" id="P9WLX5"/>
<dbReference type="OrthoDB" id="9776116at2"/>
<dbReference type="PhylomeDB" id="P9WLX5"/>
<dbReference type="Proteomes" id="UP000001584">
    <property type="component" value="Chromosome"/>
</dbReference>
<dbReference type="GO" id="GO:0005829">
    <property type="term" value="C:cytosol"/>
    <property type="evidence" value="ECO:0007005"/>
    <property type="project" value="MTBBASE"/>
</dbReference>
<dbReference type="GO" id="GO:0005886">
    <property type="term" value="C:plasma membrane"/>
    <property type="evidence" value="ECO:0007005"/>
    <property type="project" value="MTBBASE"/>
</dbReference>
<dbReference type="InterPro" id="IPR002881">
    <property type="entry name" value="DUF58"/>
</dbReference>
<dbReference type="InterPro" id="IPR036465">
    <property type="entry name" value="vWFA_dom_sf"/>
</dbReference>
<dbReference type="PANTHER" id="PTHR33608">
    <property type="entry name" value="BLL2464 PROTEIN"/>
    <property type="match status" value="1"/>
</dbReference>
<dbReference type="PANTHER" id="PTHR33608:SF6">
    <property type="entry name" value="BLL2464 PROTEIN"/>
    <property type="match status" value="1"/>
</dbReference>
<dbReference type="Pfam" id="PF01882">
    <property type="entry name" value="DUF58"/>
    <property type="match status" value="1"/>
</dbReference>
<dbReference type="SUPFAM" id="SSF53300">
    <property type="entry name" value="vWA-like"/>
    <property type="match status" value="1"/>
</dbReference>
<organism>
    <name type="scientific">Mycobacterium tuberculosis (strain ATCC 25618 / H37Rv)</name>
    <dbReference type="NCBI Taxonomy" id="83332"/>
    <lineage>
        <taxon>Bacteria</taxon>
        <taxon>Bacillati</taxon>
        <taxon>Actinomycetota</taxon>
        <taxon>Actinomycetes</taxon>
        <taxon>Mycobacteriales</taxon>
        <taxon>Mycobacteriaceae</taxon>
        <taxon>Mycobacterium</taxon>
        <taxon>Mycobacterium tuberculosis complex</taxon>
    </lineage>
</organism>
<keyword id="KW-1185">Reference proteome</keyword>
<proteinExistence type="evidence at protein level"/>
<feature type="chain" id="PRO_0000103849" description="Uncharacterized protein Rv1480">
    <location>
        <begin position="1"/>
        <end position="317"/>
    </location>
</feature>
<reference key="1">
    <citation type="journal article" date="1998" name="Nature">
        <title>Deciphering the biology of Mycobacterium tuberculosis from the complete genome sequence.</title>
        <authorList>
            <person name="Cole S.T."/>
            <person name="Brosch R."/>
            <person name="Parkhill J."/>
            <person name="Garnier T."/>
            <person name="Churcher C.M."/>
            <person name="Harris D.E."/>
            <person name="Gordon S.V."/>
            <person name="Eiglmeier K."/>
            <person name="Gas S."/>
            <person name="Barry C.E. III"/>
            <person name="Tekaia F."/>
            <person name="Badcock K."/>
            <person name="Basham D."/>
            <person name="Brown D."/>
            <person name="Chillingworth T."/>
            <person name="Connor R."/>
            <person name="Davies R.M."/>
            <person name="Devlin K."/>
            <person name="Feltwell T."/>
            <person name="Gentles S."/>
            <person name="Hamlin N."/>
            <person name="Holroyd S."/>
            <person name="Hornsby T."/>
            <person name="Jagels K."/>
            <person name="Krogh A."/>
            <person name="McLean J."/>
            <person name="Moule S."/>
            <person name="Murphy L.D."/>
            <person name="Oliver S."/>
            <person name="Osborne J."/>
            <person name="Quail M.A."/>
            <person name="Rajandream M.A."/>
            <person name="Rogers J."/>
            <person name="Rutter S."/>
            <person name="Seeger K."/>
            <person name="Skelton S."/>
            <person name="Squares S."/>
            <person name="Squares R."/>
            <person name="Sulston J.E."/>
            <person name="Taylor K."/>
            <person name="Whitehead S."/>
            <person name="Barrell B.G."/>
        </authorList>
    </citation>
    <scope>NUCLEOTIDE SEQUENCE [LARGE SCALE GENOMIC DNA]</scope>
    <source>
        <strain>ATCC 25618 / H37Rv</strain>
    </source>
</reference>
<reference key="2">
    <citation type="journal article" date="2011" name="Mol. Cell. Proteomics">
        <title>Proteogenomic analysis of Mycobacterium tuberculosis by high resolution mass spectrometry.</title>
        <authorList>
            <person name="Kelkar D.S."/>
            <person name="Kumar D."/>
            <person name="Kumar P."/>
            <person name="Balakrishnan L."/>
            <person name="Muthusamy B."/>
            <person name="Yadav A.K."/>
            <person name="Shrivastava P."/>
            <person name="Marimuthu A."/>
            <person name="Anand S."/>
            <person name="Sundaram H."/>
            <person name="Kingsbury R."/>
            <person name="Harsha H.C."/>
            <person name="Nair B."/>
            <person name="Prasad T.S."/>
            <person name="Chauhan D.S."/>
            <person name="Katoch K."/>
            <person name="Katoch V.M."/>
            <person name="Kumar P."/>
            <person name="Chaerkady R."/>
            <person name="Ramachandran S."/>
            <person name="Dash D."/>
            <person name="Pandey A."/>
        </authorList>
    </citation>
    <scope>IDENTIFICATION BY MASS SPECTROMETRY [LARGE SCALE ANALYSIS]</scope>
    <source>
        <strain>ATCC 25618 / H37Rv</strain>
    </source>
</reference>
<sequence>MTESKAPAVVHPPSMLRGDIDDPKLAAALRTLELTVKQKLDGVLHGDHLGLIPGPGSEPGESRLYQPGDDVRRMDWAVTARTTHPHVRQMIADRELETWLVVDMSASLDFGTACCEKRDLAVAAAAAITFLNSGGGNRLGALIANGAAMTRVPARTGRQHQHTMLRTIATMPQAPAGVRGDLAVAIDALRRPERRRGMAVIISDFLGPINWMRPLRAIAARHEVLAIEVLDPRDVELPDVGDVVLQDAESGVVREFSIDPALRDDFARAAAAHRADVARTIRGCGAPLLSLRTDRDWLADIVRFVASRRRGALAGHQ</sequence>
<accession>P9WLX5</accession>
<accession>L0T8D9</accession>
<accession>O53171</accession>
<accession>P64853</accession>
<accession>P71761</accession>
<gene>
    <name type="ordered locus">Rv1480</name>
    <name type="ORF">MTCY277.01</name>
    <name type="ORF">MTV007.27</name>
</gene>
<protein>
    <recommendedName>
        <fullName>Uncharacterized protein Rv1480</fullName>
    </recommendedName>
</protein>